<protein>
    <recommendedName>
        <fullName evidence="1">Small ribosomal subunit protein uS5</fullName>
    </recommendedName>
    <alternativeName>
        <fullName evidence="2">30S ribosomal protein S5</fullName>
    </alternativeName>
</protein>
<keyword id="KW-1185">Reference proteome</keyword>
<keyword id="KW-0687">Ribonucleoprotein</keyword>
<keyword id="KW-0689">Ribosomal protein</keyword>
<keyword id="KW-0694">RNA-binding</keyword>
<keyword id="KW-0699">rRNA-binding</keyword>
<proteinExistence type="inferred from homology"/>
<evidence type="ECO:0000255" key="1">
    <source>
        <dbReference type="HAMAP-Rule" id="MF_01307"/>
    </source>
</evidence>
<evidence type="ECO:0000305" key="2"/>
<comment type="function">
    <text evidence="1">With S4 and S12 plays an important role in translational accuracy.</text>
</comment>
<comment type="function">
    <text evidence="1">Located at the back of the 30S subunit body where it stabilizes the conformation of the head with respect to the body.</text>
</comment>
<comment type="subunit">
    <text evidence="1">Part of the 30S ribosomal subunit. Contacts proteins S4 and S8.</text>
</comment>
<comment type="domain">
    <text>The N-terminal domain interacts with the head of the 30S subunit; the C-terminal domain interacts with the body and contacts protein S4. The interaction surface between S4 and S5 is involved in control of translational fidelity.</text>
</comment>
<comment type="similarity">
    <text evidence="1">Belongs to the universal ribosomal protein uS5 family.</text>
</comment>
<sequence length="171" mass="17897">MAKTAKGIRPGELNLKEKLVHINRTAKVVKGGKRFGFNAIVVVGDKEGHVGYGLGKANEVQDAIAKGVEDGKKNVVKVPIIKGTIPHQIVAKYGSAKVLMKPATPGTGLIAGGAVRAVLEMAGVRDVLTKSLGSSNPHNVVKAAILGLKSISDANDVAERRSKSLKEVFES</sequence>
<dbReference type="EMBL" id="CP000096">
    <property type="protein sequence ID" value="ABB23086.1"/>
    <property type="molecule type" value="Genomic_DNA"/>
</dbReference>
<dbReference type="RefSeq" id="WP_011356962.1">
    <property type="nucleotide sequence ID" value="NC_007512.1"/>
</dbReference>
<dbReference type="SMR" id="Q3B6E5"/>
<dbReference type="STRING" id="319225.Plut_0198"/>
<dbReference type="KEGG" id="plt:Plut_0198"/>
<dbReference type="eggNOG" id="COG0098">
    <property type="taxonomic scope" value="Bacteria"/>
</dbReference>
<dbReference type="HOGENOM" id="CLU_065898_2_2_10"/>
<dbReference type="OrthoDB" id="9809045at2"/>
<dbReference type="Proteomes" id="UP000002709">
    <property type="component" value="Chromosome"/>
</dbReference>
<dbReference type="GO" id="GO:0015935">
    <property type="term" value="C:small ribosomal subunit"/>
    <property type="evidence" value="ECO:0007669"/>
    <property type="project" value="InterPro"/>
</dbReference>
<dbReference type="GO" id="GO:0019843">
    <property type="term" value="F:rRNA binding"/>
    <property type="evidence" value="ECO:0007669"/>
    <property type="project" value="UniProtKB-UniRule"/>
</dbReference>
<dbReference type="GO" id="GO:0003735">
    <property type="term" value="F:structural constituent of ribosome"/>
    <property type="evidence" value="ECO:0007669"/>
    <property type="project" value="InterPro"/>
</dbReference>
<dbReference type="GO" id="GO:0006412">
    <property type="term" value="P:translation"/>
    <property type="evidence" value="ECO:0007669"/>
    <property type="project" value="UniProtKB-UniRule"/>
</dbReference>
<dbReference type="FunFam" id="3.30.160.20:FF:000001">
    <property type="entry name" value="30S ribosomal protein S5"/>
    <property type="match status" value="1"/>
</dbReference>
<dbReference type="FunFam" id="3.30.230.10:FF:000002">
    <property type="entry name" value="30S ribosomal protein S5"/>
    <property type="match status" value="1"/>
</dbReference>
<dbReference type="Gene3D" id="3.30.160.20">
    <property type="match status" value="1"/>
</dbReference>
<dbReference type="Gene3D" id="3.30.230.10">
    <property type="match status" value="1"/>
</dbReference>
<dbReference type="HAMAP" id="MF_01307_B">
    <property type="entry name" value="Ribosomal_uS5_B"/>
    <property type="match status" value="1"/>
</dbReference>
<dbReference type="InterPro" id="IPR020568">
    <property type="entry name" value="Ribosomal_Su5_D2-typ_SF"/>
</dbReference>
<dbReference type="InterPro" id="IPR000851">
    <property type="entry name" value="Ribosomal_uS5"/>
</dbReference>
<dbReference type="InterPro" id="IPR005712">
    <property type="entry name" value="Ribosomal_uS5_bac-type"/>
</dbReference>
<dbReference type="InterPro" id="IPR005324">
    <property type="entry name" value="Ribosomal_uS5_C"/>
</dbReference>
<dbReference type="InterPro" id="IPR013810">
    <property type="entry name" value="Ribosomal_uS5_N"/>
</dbReference>
<dbReference type="InterPro" id="IPR018192">
    <property type="entry name" value="Ribosomal_uS5_N_CS"/>
</dbReference>
<dbReference type="InterPro" id="IPR014721">
    <property type="entry name" value="Ribsml_uS5_D2-typ_fold_subgr"/>
</dbReference>
<dbReference type="NCBIfam" id="TIGR01021">
    <property type="entry name" value="rpsE_bact"/>
    <property type="match status" value="1"/>
</dbReference>
<dbReference type="PANTHER" id="PTHR48277">
    <property type="entry name" value="MITOCHONDRIAL RIBOSOMAL PROTEIN S5"/>
    <property type="match status" value="1"/>
</dbReference>
<dbReference type="PANTHER" id="PTHR48277:SF1">
    <property type="entry name" value="MITOCHONDRIAL RIBOSOMAL PROTEIN S5"/>
    <property type="match status" value="1"/>
</dbReference>
<dbReference type="Pfam" id="PF00333">
    <property type="entry name" value="Ribosomal_S5"/>
    <property type="match status" value="1"/>
</dbReference>
<dbReference type="Pfam" id="PF03719">
    <property type="entry name" value="Ribosomal_S5_C"/>
    <property type="match status" value="1"/>
</dbReference>
<dbReference type="SUPFAM" id="SSF54768">
    <property type="entry name" value="dsRNA-binding domain-like"/>
    <property type="match status" value="1"/>
</dbReference>
<dbReference type="SUPFAM" id="SSF54211">
    <property type="entry name" value="Ribosomal protein S5 domain 2-like"/>
    <property type="match status" value="1"/>
</dbReference>
<dbReference type="PROSITE" id="PS00585">
    <property type="entry name" value="RIBOSOMAL_S5"/>
    <property type="match status" value="1"/>
</dbReference>
<dbReference type="PROSITE" id="PS50881">
    <property type="entry name" value="S5_DSRBD"/>
    <property type="match status" value="1"/>
</dbReference>
<reference key="1">
    <citation type="submission" date="2005-08" db="EMBL/GenBank/DDBJ databases">
        <title>Complete sequence of Pelodictyon luteolum DSM 273.</title>
        <authorList>
            <consortium name="US DOE Joint Genome Institute"/>
            <person name="Copeland A."/>
            <person name="Lucas S."/>
            <person name="Lapidus A."/>
            <person name="Barry K."/>
            <person name="Detter J.C."/>
            <person name="Glavina T."/>
            <person name="Hammon N."/>
            <person name="Israni S."/>
            <person name="Pitluck S."/>
            <person name="Bryant D."/>
            <person name="Schmutz J."/>
            <person name="Larimer F."/>
            <person name="Land M."/>
            <person name="Kyrpides N."/>
            <person name="Ivanova N."/>
            <person name="Richardson P."/>
        </authorList>
    </citation>
    <scope>NUCLEOTIDE SEQUENCE [LARGE SCALE GENOMIC DNA]</scope>
    <source>
        <strain>DSM 273 / BCRC 81028 / 2530</strain>
    </source>
</reference>
<name>RS5_CHLL3</name>
<gene>
    <name evidence="1" type="primary">rpsE</name>
    <name type="ordered locus">Plut_0198</name>
</gene>
<feature type="chain" id="PRO_0000230356" description="Small ribosomal subunit protein uS5">
    <location>
        <begin position="1"/>
        <end position="171"/>
    </location>
</feature>
<feature type="domain" description="S5 DRBM" evidence="1">
    <location>
        <begin position="15"/>
        <end position="78"/>
    </location>
</feature>
<organism>
    <name type="scientific">Chlorobium luteolum (strain DSM 273 / BCRC 81028 / 2530)</name>
    <name type="common">Pelodictyon luteolum</name>
    <dbReference type="NCBI Taxonomy" id="319225"/>
    <lineage>
        <taxon>Bacteria</taxon>
        <taxon>Pseudomonadati</taxon>
        <taxon>Chlorobiota</taxon>
        <taxon>Chlorobiia</taxon>
        <taxon>Chlorobiales</taxon>
        <taxon>Chlorobiaceae</taxon>
        <taxon>Chlorobium/Pelodictyon group</taxon>
        <taxon>Pelodictyon</taxon>
    </lineage>
</organism>
<accession>Q3B6E5</accession>